<proteinExistence type="evidence at transcript level"/>
<sequence>MANVADTKLYDILGVPPGASENELKKAYRKLAKEYHPDKNPNAGDKFKEISFAYEVLSNPEKRELYDRYGEQGLREGSGGGGGMDDIFSHIFGGGLFSFMGNQSRSRNGRRRGEDMMHPLKVSLEDLYNGKTTKLQLSKNVLCSACSGQGGKSGAVQKCSACRGRGVRIMIRQLAPGMVQQMQSVCSDCNGEGEVINEKDRCKKCEGKKVIKEVKILEVHVDKGMKHGQRITFTGEADQAPGVEPGDIVLLLQEKEHEVFQRDGNDLHMTYKIGLVEALCGFQFTFKHLDGRQIVVKYPPGKVIEPGCVRVVRGEGMPQYRNPFEKGDLYIKFDVQFPENNWINPDKLSELEDLLPSRPEVPNIIGDTEEVELQEFDSTRGSGGGQRREAYNDSSDEESSSHHGPGVQCAHQ</sequence>
<keyword id="KW-0007">Acetylation</keyword>
<keyword id="KW-0143">Chaperone</keyword>
<keyword id="KW-1017">Isopeptide bond</keyword>
<keyword id="KW-0449">Lipoprotein</keyword>
<keyword id="KW-0472">Membrane</keyword>
<keyword id="KW-0479">Metal-binding</keyword>
<keyword id="KW-0488">Methylation</keyword>
<keyword id="KW-0597">Phosphoprotein</keyword>
<keyword id="KW-0636">Prenylation</keyword>
<keyword id="KW-1185">Reference proteome</keyword>
<keyword id="KW-0677">Repeat</keyword>
<keyword id="KW-0832">Ubl conjugation</keyword>
<keyword id="KW-0862">Zinc</keyword>
<keyword id="KW-0863">Zinc-finger</keyword>
<protein>
    <recommendedName>
        <fullName>DnaJ homolog subfamily A member 2</fullName>
    </recommendedName>
</protein>
<evidence type="ECO:0000250" key="1"/>
<evidence type="ECO:0000250" key="2">
    <source>
        <dbReference type="UniProtKB" id="O35824"/>
    </source>
</evidence>
<evidence type="ECO:0000250" key="3">
    <source>
        <dbReference type="UniProtKB" id="O60884"/>
    </source>
</evidence>
<evidence type="ECO:0000250" key="4">
    <source>
        <dbReference type="UniProtKB" id="Q9QYJ0"/>
    </source>
</evidence>
<evidence type="ECO:0000256" key="5">
    <source>
        <dbReference type="SAM" id="MobiDB-lite"/>
    </source>
</evidence>
<evidence type="ECO:0000305" key="6"/>
<reference key="1">
    <citation type="submission" date="2006-02" db="EMBL/GenBank/DDBJ databases">
        <authorList>
            <consortium name="NIH - Mammalian Gene Collection (MGC) project"/>
        </authorList>
    </citation>
    <scope>NUCLEOTIDE SEQUENCE [LARGE SCALE MRNA]</scope>
    <source>
        <strain>Hereford</strain>
        <tissue>Uterus</tissue>
    </source>
</reference>
<accession>Q2HJ94</accession>
<name>DNJA2_BOVIN</name>
<dbReference type="EMBL" id="BC113244">
    <property type="protein sequence ID" value="AAI13245.1"/>
    <property type="molecule type" value="mRNA"/>
</dbReference>
<dbReference type="RefSeq" id="NP_001035581.1">
    <property type="nucleotide sequence ID" value="NM_001040491.1"/>
</dbReference>
<dbReference type="SMR" id="Q2HJ94"/>
<dbReference type="FunCoup" id="Q2HJ94">
    <property type="interactions" value="2982"/>
</dbReference>
<dbReference type="STRING" id="9913.ENSBTAP00000004890"/>
<dbReference type="PaxDb" id="9913-ENSBTAP00000004890"/>
<dbReference type="Ensembl" id="ENSBTAT00000004890.4">
    <property type="protein sequence ID" value="ENSBTAP00000004890.3"/>
    <property type="gene ID" value="ENSBTAG00000003757.5"/>
</dbReference>
<dbReference type="GeneID" id="360006"/>
<dbReference type="KEGG" id="bta:360006"/>
<dbReference type="CTD" id="10294"/>
<dbReference type="VEuPathDB" id="HostDB:ENSBTAG00000003757"/>
<dbReference type="VGNC" id="VGNC:111270">
    <property type="gene designation" value="DNAJA2"/>
</dbReference>
<dbReference type="eggNOG" id="KOG0712">
    <property type="taxonomic scope" value="Eukaryota"/>
</dbReference>
<dbReference type="GeneTree" id="ENSGT00940000154688"/>
<dbReference type="HOGENOM" id="CLU_017633_10_0_1"/>
<dbReference type="InParanoid" id="Q2HJ94"/>
<dbReference type="OMA" id="RVCPTCV"/>
<dbReference type="OrthoDB" id="550424at2759"/>
<dbReference type="TreeFam" id="TF105141"/>
<dbReference type="Reactome" id="R-BTA-3371497">
    <property type="pathway name" value="HSP90 chaperone cycle for steroid hormone receptors (SHR) in the presence of ligand"/>
</dbReference>
<dbReference type="Proteomes" id="UP000009136">
    <property type="component" value="Chromosome 18"/>
</dbReference>
<dbReference type="Bgee" id="ENSBTAG00000003757">
    <property type="expression patterns" value="Expressed in esophagus and 103 other cell types or tissues"/>
</dbReference>
<dbReference type="GO" id="GO:0005737">
    <property type="term" value="C:cytoplasm"/>
    <property type="evidence" value="ECO:0000318"/>
    <property type="project" value="GO_Central"/>
</dbReference>
<dbReference type="GO" id="GO:0005829">
    <property type="term" value="C:cytosol"/>
    <property type="evidence" value="ECO:0000318"/>
    <property type="project" value="GO_Central"/>
</dbReference>
<dbReference type="GO" id="GO:0016020">
    <property type="term" value="C:membrane"/>
    <property type="evidence" value="ECO:0007669"/>
    <property type="project" value="UniProtKB-SubCell"/>
</dbReference>
<dbReference type="GO" id="GO:0005524">
    <property type="term" value="F:ATP binding"/>
    <property type="evidence" value="ECO:0007669"/>
    <property type="project" value="InterPro"/>
</dbReference>
<dbReference type="GO" id="GO:0001671">
    <property type="term" value="F:ATPase activator activity"/>
    <property type="evidence" value="ECO:0000250"/>
    <property type="project" value="UniProtKB"/>
</dbReference>
<dbReference type="GO" id="GO:0030544">
    <property type="term" value="F:Hsp70 protein binding"/>
    <property type="evidence" value="ECO:0007669"/>
    <property type="project" value="InterPro"/>
</dbReference>
<dbReference type="GO" id="GO:0051087">
    <property type="term" value="F:protein-folding chaperone binding"/>
    <property type="evidence" value="ECO:0000318"/>
    <property type="project" value="GO_Central"/>
</dbReference>
<dbReference type="GO" id="GO:0051082">
    <property type="term" value="F:unfolded protein binding"/>
    <property type="evidence" value="ECO:0007669"/>
    <property type="project" value="InterPro"/>
</dbReference>
<dbReference type="GO" id="GO:0008270">
    <property type="term" value="F:zinc ion binding"/>
    <property type="evidence" value="ECO:0007669"/>
    <property type="project" value="UniProtKB-KW"/>
</dbReference>
<dbReference type="GO" id="GO:0042026">
    <property type="term" value="P:protein refolding"/>
    <property type="evidence" value="ECO:0000318"/>
    <property type="project" value="GO_Central"/>
</dbReference>
<dbReference type="GO" id="GO:0009408">
    <property type="term" value="P:response to heat"/>
    <property type="evidence" value="ECO:0007669"/>
    <property type="project" value="InterPro"/>
</dbReference>
<dbReference type="CDD" id="cd06257">
    <property type="entry name" value="DnaJ"/>
    <property type="match status" value="1"/>
</dbReference>
<dbReference type="CDD" id="cd10747">
    <property type="entry name" value="DnaJ_C"/>
    <property type="match status" value="1"/>
</dbReference>
<dbReference type="CDD" id="cd10719">
    <property type="entry name" value="DnaJ_zf"/>
    <property type="match status" value="1"/>
</dbReference>
<dbReference type="FunFam" id="2.60.260.20:FF:000068">
    <property type="entry name" value="Chaperone protein dnaJ 3"/>
    <property type="match status" value="1"/>
</dbReference>
<dbReference type="FunFam" id="1.10.287.110:FF:000016">
    <property type="entry name" value="DnaJ (Hsp40) homolog, subfamily A, member 2"/>
    <property type="match status" value="1"/>
</dbReference>
<dbReference type="FunFam" id="2.10.230.10:FF:000005">
    <property type="entry name" value="DnaJ homolog subfamily A member 1"/>
    <property type="match status" value="1"/>
</dbReference>
<dbReference type="FunFam" id="2.60.260.20:FF:000003">
    <property type="entry name" value="DnaJ subfamily A member 2"/>
    <property type="match status" value="1"/>
</dbReference>
<dbReference type="Gene3D" id="1.10.287.110">
    <property type="entry name" value="DnaJ domain"/>
    <property type="match status" value="1"/>
</dbReference>
<dbReference type="Gene3D" id="2.10.230.10">
    <property type="entry name" value="Heat shock protein DnaJ, cysteine-rich domain"/>
    <property type="match status" value="1"/>
</dbReference>
<dbReference type="Gene3D" id="2.60.260.20">
    <property type="entry name" value="Urease metallochaperone UreE, N-terminal domain"/>
    <property type="match status" value="2"/>
</dbReference>
<dbReference type="HAMAP" id="MF_01152">
    <property type="entry name" value="DnaJ"/>
    <property type="match status" value="1"/>
</dbReference>
<dbReference type="InterPro" id="IPR012724">
    <property type="entry name" value="DnaJ"/>
</dbReference>
<dbReference type="InterPro" id="IPR002939">
    <property type="entry name" value="DnaJ_C"/>
</dbReference>
<dbReference type="InterPro" id="IPR001623">
    <property type="entry name" value="DnaJ_domain"/>
</dbReference>
<dbReference type="InterPro" id="IPR018253">
    <property type="entry name" value="DnaJ_domain_CS"/>
</dbReference>
<dbReference type="InterPro" id="IPR044713">
    <property type="entry name" value="DNJA1/2-like"/>
</dbReference>
<dbReference type="InterPro" id="IPR008971">
    <property type="entry name" value="HSP40/DnaJ_pept-bd"/>
</dbReference>
<dbReference type="InterPro" id="IPR001305">
    <property type="entry name" value="HSP_DnaJ_Cys-rich_dom"/>
</dbReference>
<dbReference type="InterPro" id="IPR036410">
    <property type="entry name" value="HSP_DnaJ_Cys-rich_dom_sf"/>
</dbReference>
<dbReference type="InterPro" id="IPR036869">
    <property type="entry name" value="J_dom_sf"/>
</dbReference>
<dbReference type="PANTHER" id="PTHR43888">
    <property type="entry name" value="DNAJ-LIKE-2, ISOFORM A-RELATED"/>
    <property type="match status" value="1"/>
</dbReference>
<dbReference type="Pfam" id="PF00226">
    <property type="entry name" value="DnaJ"/>
    <property type="match status" value="1"/>
</dbReference>
<dbReference type="Pfam" id="PF01556">
    <property type="entry name" value="DnaJ_C"/>
    <property type="match status" value="1"/>
</dbReference>
<dbReference type="Pfam" id="PF00684">
    <property type="entry name" value="DnaJ_CXXCXGXG"/>
    <property type="match status" value="1"/>
</dbReference>
<dbReference type="PRINTS" id="PR00625">
    <property type="entry name" value="JDOMAIN"/>
</dbReference>
<dbReference type="SMART" id="SM00271">
    <property type="entry name" value="DnaJ"/>
    <property type="match status" value="1"/>
</dbReference>
<dbReference type="SUPFAM" id="SSF46565">
    <property type="entry name" value="Chaperone J-domain"/>
    <property type="match status" value="1"/>
</dbReference>
<dbReference type="SUPFAM" id="SSF57938">
    <property type="entry name" value="DnaJ/Hsp40 cysteine-rich domain"/>
    <property type="match status" value="1"/>
</dbReference>
<dbReference type="SUPFAM" id="SSF49493">
    <property type="entry name" value="HSP40/DnaJ peptide-binding domain"/>
    <property type="match status" value="2"/>
</dbReference>
<dbReference type="PROSITE" id="PS00636">
    <property type="entry name" value="DNAJ_1"/>
    <property type="match status" value="1"/>
</dbReference>
<dbReference type="PROSITE" id="PS50076">
    <property type="entry name" value="DNAJ_2"/>
    <property type="match status" value="1"/>
</dbReference>
<dbReference type="PROSITE" id="PS51188">
    <property type="entry name" value="ZF_CR"/>
    <property type="match status" value="1"/>
</dbReference>
<comment type="function">
    <text evidence="3">Co-chaperone of Hsc70. Stimulates ATP hydrolysis and the folding of unfolded proteins mediated by HSPA1A/B (in vitro).</text>
</comment>
<comment type="subcellular location">
    <subcellularLocation>
        <location evidence="6">Membrane</location>
        <topology evidence="6">Lipid-anchor</topology>
    </subcellularLocation>
</comment>
<gene>
    <name type="primary">DNAJA2</name>
</gene>
<feature type="chain" id="PRO_0000290026" description="DnaJ homolog subfamily A member 2">
    <location>
        <begin position="1"/>
        <end position="409"/>
    </location>
</feature>
<feature type="propeptide" id="PRO_0000396757" description="Removed in mature form" evidence="1">
    <location>
        <begin position="410"/>
        <end position="412"/>
    </location>
</feature>
<feature type="domain" description="J">
    <location>
        <begin position="8"/>
        <end position="70"/>
    </location>
</feature>
<feature type="repeat" description="CXXCXGXG motif">
    <location>
        <begin position="143"/>
        <end position="150"/>
    </location>
</feature>
<feature type="repeat" description="CXXCXGXG motif">
    <location>
        <begin position="159"/>
        <end position="166"/>
    </location>
</feature>
<feature type="repeat" description="CXXCXGXG motif">
    <location>
        <begin position="186"/>
        <end position="193"/>
    </location>
</feature>
<feature type="repeat" description="CXXCXGXG motif">
    <location>
        <begin position="202"/>
        <end position="209"/>
    </location>
</feature>
<feature type="zinc finger region" description="CR-type">
    <location>
        <begin position="130"/>
        <end position="214"/>
    </location>
</feature>
<feature type="region of interest" description="Disordered" evidence="5">
    <location>
        <begin position="359"/>
        <end position="412"/>
    </location>
</feature>
<feature type="binding site" evidence="1">
    <location>
        <position position="143"/>
    </location>
    <ligand>
        <name>Zn(2+)</name>
        <dbReference type="ChEBI" id="CHEBI:29105"/>
        <label>1</label>
    </ligand>
</feature>
<feature type="binding site" evidence="1">
    <location>
        <position position="146"/>
    </location>
    <ligand>
        <name>Zn(2+)</name>
        <dbReference type="ChEBI" id="CHEBI:29105"/>
        <label>1</label>
    </ligand>
</feature>
<feature type="binding site" evidence="1">
    <location>
        <position position="159"/>
    </location>
    <ligand>
        <name>Zn(2+)</name>
        <dbReference type="ChEBI" id="CHEBI:29105"/>
        <label>2</label>
    </ligand>
</feature>
<feature type="binding site" evidence="1">
    <location>
        <position position="162"/>
    </location>
    <ligand>
        <name>Zn(2+)</name>
        <dbReference type="ChEBI" id="CHEBI:29105"/>
        <label>2</label>
    </ligand>
</feature>
<feature type="binding site" evidence="1">
    <location>
        <position position="186"/>
    </location>
    <ligand>
        <name>Zn(2+)</name>
        <dbReference type="ChEBI" id="CHEBI:29105"/>
        <label>2</label>
    </ligand>
</feature>
<feature type="binding site" evidence="1">
    <location>
        <position position="189"/>
    </location>
    <ligand>
        <name>Zn(2+)</name>
        <dbReference type="ChEBI" id="CHEBI:29105"/>
        <label>2</label>
    </ligand>
</feature>
<feature type="binding site" evidence="1">
    <location>
        <position position="202"/>
    </location>
    <ligand>
        <name>Zn(2+)</name>
        <dbReference type="ChEBI" id="CHEBI:29105"/>
        <label>1</label>
    </ligand>
</feature>
<feature type="binding site" evidence="1">
    <location>
        <position position="205"/>
    </location>
    <ligand>
        <name>Zn(2+)</name>
        <dbReference type="ChEBI" id="CHEBI:29105"/>
        <label>1</label>
    </ligand>
</feature>
<feature type="modified residue" description="N6-acetyllysine" evidence="4">
    <location>
        <position position="39"/>
    </location>
</feature>
<feature type="modified residue" description="Phosphoserine" evidence="3">
    <location>
        <position position="78"/>
    </location>
</feature>
<feature type="modified residue" description="Phosphoserine" evidence="2">
    <location>
        <position position="123"/>
    </location>
</feature>
<feature type="modified residue" description="N6-acetyllysine" evidence="4">
    <location>
        <position position="152"/>
    </location>
</feature>
<feature type="modified residue" description="Phosphotyrosine" evidence="3">
    <location>
        <position position="391"/>
    </location>
</feature>
<feature type="modified residue" description="Phosphoserine" evidence="3">
    <location>
        <position position="394"/>
    </location>
</feature>
<feature type="modified residue" description="Phosphoserine" evidence="3">
    <location>
        <position position="395"/>
    </location>
</feature>
<feature type="modified residue" description="Cysteine methyl ester" evidence="3">
    <location>
        <position position="409"/>
    </location>
</feature>
<feature type="lipid moiety-binding region" description="S-farnesyl cysteine" evidence="3">
    <location>
        <position position="409"/>
    </location>
</feature>
<feature type="cross-link" description="Glycyl lysine isopeptide (Lys-Gly) (interchain with G-Cter in SUMO2)" evidence="3">
    <location>
        <position position="134"/>
    </location>
</feature>
<organism>
    <name type="scientific">Bos taurus</name>
    <name type="common">Bovine</name>
    <dbReference type="NCBI Taxonomy" id="9913"/>
    <lineage>
        <taxon>Eukaryota</taxon>
        <taxon>Metazoa</taxon>
        <taxon>Chordata</taxon>
        <taxon>Craniata</taxon>
        <taxon>Vertebrata</taxon>
        <taxon>Euteleostomi</taxon>
        <taxon>Mammalia</taxon>
        <taxon>Eutheria</taxon>
        <taxon>Laurasiatheria</taxon>
        <taxon>Artiodactyla</taxon>
        <taxon>Ruminantia</taxon>
        <taxon>Pecora</taxon>
        <taxon>Bovidae</taxon>
        <taxon>Bovinae</taxon>
        <taxon>Bos</taxon>
    </lineage>
</organism>